<evidence type="ECO:0000250" key="1"/>
<evidence type="ECO:0000250" key="2">
    <source>
        <dbReference type="UniProtKB" id="Q91WB2"/>
    </source>
</evidence>
<evidence type="ECO:0000255" key="3"/>
<evidence type="ECO:0000256" key="4">
    <source>
        <dbReference type="SAM" id="MobiDB-lite"/>
    </source>
</evidence>
<evidence type="ECO:0000305" key="5"/>
<evidence type="ECO:0000312" key="6">
    <source>
        <dbReference type="RGD" id="1305821"/>
    </source>
</evidence>
<proteinExistence type="evidence at transcript level"/>
<dbReference type="EMBL" id="BC089948">
    <property type="protein sequence ID" value="AAH89948.1"/>
    <property type="molecule type" value="mRNA"/>
</dbReference>
<dbReference type="RefSeq" id="NP_001012349.1">
    <property type="nucleotide sequence ID" value="NM_001012349.2"/>
</dbReference>
<dbReference type="SMR" id="Q5FVJ3"/>
<dbReference type="FunCoup" id="Q5FVJ3">
    <property type="interactions" value="305"/>
</dbReference>
<dbReference type="STRING" id="10116.ENSRNOP00000013507"/>
<dbReference type="PhosphoSitePlus" id="Q5FVJ3"/>
<dbReference type="PaxDb" id="10116-ENSRNOP00000013507"/>
<dbReference type="Ensembl" id="ENSRNOT00000013507.5">
    <property type="protein sequence ID" value="ENSRNOP00000013507.4"/>
    <property type="gene ID" value="ENSRNOG00000010068.5"/>
</dbReference>
<dbReference type="GeneID" id="296635"/>
<dbReference type="KEGG" id="rno:296635"/>
<dbReference type="UCSC" id="RGD:1305821">
    <property type="organism name" value="rat"/>
</dbReference>
<dbReference type="AGR" id="RGD:1305821"/>
<dbReference type="CTD" id="84814"/>
<dbReference type="RGD" id="1305821">
    <property type="gene designation" value="Plpp7"/>
</dbReference>
<dbReference type="eggNOG" id="KOG4268">
    <property type="taxonomic scope" value="Eukaryota"/>
</dbReference>
<dbReference type="GeneTree" id="ENSGT00940000157147"/>
<dbReference type="HOGENOM" id="CLU_072573_4_0_1"/>
<dbReference type="InParanoid" id="Q5FVJ3"/>
<dbReference type="OMA" id="FVSFMLN"/>
<dbReference type="OrthoDB" id="56744at9989"/>
<dbReference type="PhylomeDB" id="Q5FVJ3"/>
<dbReference type="TreeFam" id="TF323272"/>
<dbReference type="PRO" id="PR:Q5FVJ3"/>
<dbReference type="Proteomes" id="UP000002494">
    <property type="component" value="Chromosome 3"/>
</dbReference>
<dbReference type="Bgee" id="ENSRNOG00000010068">
    <property type="expression patterns" value="Expressed in skeletal muscle tissue and 20 other cell types or tissues"/>
</dbReference>
<dbReference type="GO" id="GO:0005789">
    <property type="term" value="C:endoplasmic reticulum membrane"/>
    <property type="evidence" value="ECO:0007669"/>
    <property type="project" value="UniProtKB-SubCell"/>
</dbReference>
<dbReference type="GO" id="GO:0016020">
    <property type="term" value="C:membrane"/>
    <property type="evidence" value="ECO:0000318"/>
    <property type="project" value="GO_Central"/>
</dbReference>
<dbReference type="GO" id="GO:0005635">
    <property type="term" value="C:nuclear envelope"/>
    <property type="evidence" value="ECO:0000266"/>
    <property type="project" value="RGD"/>
</dbReference>
<dbReference type="GO" id="GO:0042392">
    <property type="term" value="F:sphingosine-1-phosphate phosphatase activity"/>
    <property type="evidence" value="ECO:0000318"/>
    <property type="project" value="GO_Central"/>
</dbReference>
<dbReference type="GO" id="GO:0010832">
    <property type="term" value="P:negative regulation of myotube differentiation"/>
    <property type="evidence" value="ECO:0000266"/>
    <property type="project" value="RGD"/>
</dbReference>
<dbReference type="CDD" id="cd03391">
    <property type="entry name" value="PAP2_containing_2_like"/>
    <property type="match status" value="1"/>
</dbReference>
<dbReference type="FunFam" id="1.20.144.10:FF:000020">
    <property type="entry name" value="phospholipid phosphatase 6"/>
    <property type="match status" value="1"/>
</dbReference>
<dbReference type="Gene3D" id="1.20.144.10">
    <property type="entry name" value="Phosphatidic acid phosphatase type 2/haloperoxidase"/>
    <property type="match status" value="1"/>
</dbReference>
<dbReference type="InterPro" id="IPR036938">
    <property type="entry name" value="P_Acid_Pase_2/haloperoxi_sf"/>
</dbReference>
<dbReference type="InterPro" id="IPR000326">
    <property type="entry name" value="P_Acid_Pase_2/haloperoxidase"/>
</dbReference>
<dbReference type="PANTHER" id="PTHR14969:SF17">
    <property type="entry name" value="INACTIVE PHOSPHOLIPID PHOSPHATASE 7"/>
    <property type="match status" value="1"/>
</dbReference>
<dbReference type="PANTHER" id="PTHR14969">
    <property type="entry name" value="SPHINGOSINE-1-PHOSPHATE PHOSPHOHYDROLASE"/>
    <property type="match status" value="1"/>
</dbReference>
<dbReference type="Pfam" id="PF01569">
    <property type="entry name" value="PAP2"/>
    <property type="match status" value="1"/>
</dbReference>
<dbReference type="SMART" id="SM00014">
    <property type="entry name" value="acidPPc"/>
    <property type="match status" value="1"/>
</dbReference>
<dbReference type="SUPFAM" id="SSF48317">
    <property type="entry name" value="Acid phosphatase/Vanadium-dependent haloperoxidase"/>
    <property type="match status" value="1"/>
</dbReference>
<protein>
    <recommendedName>
        <fullName evidence="6">Inactive phospholipid phosphatase 7</fullName>
    </recommendedName>
    <alternativeName>
        <fullName>Phosphatidic acid phosphatase type 2 domain-containing protein 3</fullName>
    </alternativeName>
</protein>
<organism>
    <name type="scientific">Rattus norvegicus</name>
    <name type="common">Rat</name>
    <dbReference type="NCBI Taxonomy" id="10116"/>
    <lineage>
        <taxon>Eukaryota</taxon>
        <taxon>Metazoa</taxon>
        <taxon>Chordata</taxon>
        <taxon>Craniata</taxon>
        <taxon>Vertebrata</taxon>
        <taxon>Euteleostomi</taxon>
        <taxon>Mammalia</taxon>
        <taxon>Eutheria</taxon>
        <taxon>Euarchontoglires</taxon>
        <taxon>Glires</taxon>
        <taxon>Rodentia</taxon>
        <taxon>Myomorpha</taxon>
        <taxon>Muroidea</taxon>
        <taxon>Muridae</taxon>
        <taxon>Murinae</taxon>
        <taxon>Rattus</taxon>
    </lineage>
</organism>
<comment type="function">
    <text evidence="1">Plays a role as negative regulator of myoblast differentiation, in part through effects on MTOR signaling. Has no detectable enzymatic activity (By similarity).</text>
</comment>
<comment type="subunit">
    <text evidence="1">Homo- and heterooligomer. Interacts with MTOR; controls MTOR-dependent IGF2 expression during myoblast differentiation (By similarity).</text>
</comment>
<comment type="subcellular location">
    <subcellularLocation>
        <location>Nucleus envelope</location>
    </subcellularLocation>
    <subcellularLocation>
        <location>Endoplasmic reticulum membrane</location>
    </subcellularLocation>
    <subcellularLocation>
        <location>Membrane</location>
        <topology>Multi-pass membrane protein</topology>
    </subcellularLocation>
    <text evidence="1">Both the N- and C-terminal are exposed to the cytoplasm/nucleoplasm.</text>
</comment>
<comment type="similarity">
    <text evidence="5">Belongs to the PA-phosphatase related phosphoesterase family.</text>
</comment>
<sequence>MPVSQSRARARDRNNVLNRAEFLSLNQPPKGTQEPRSSGRKASGPSTQPPPSSDGARERRQSQQLPEEDCMQLNPSFKGIAFNSLLAIDICMSKRLGVCAGRAASWASARSMVKLIGITSHGIPWIGGTILCLVRSSTLAGQEVLMNLLLALLLDIMTVAGVQKLIKRRGPYETSPGLLDYLTMDIYAFPAGHASRAAMVSKFFLSHLVLAVPLRVLLVLWAFCVGLSRVMIGRHHITDVISGFIIGYFQFRLVELVWMSSNTCQMLISAW</sequence>
<accession>Q5FVJ3</accession>
<reference key="1">
    <citation type="journal article" date="2004" name="Genome Res.">
        <title>The status, quality, and expansion of the NIH full-length cDNA project: the Mammalian Gene Collection (MGC).</title>
        <authorList>
            <consortium name="The MGC Project Team"/>
        </authorList>
    </citation>
    <scope>NUCLEOTIDE SEQUENCE [LARGE SCALE MRNA]</scope>
    <source>
        <tissue>Brain</tissue>
    </source>
</reference>
<keyword id="KW-0256">Endoplasmic reticulum</keyword>
<keyword id="KW-0472">Membrane</keyword>
<keyword id="KW-0539">Nucleus</keyword>
<keyword id="KW-0597">Phosphoprotein</keyword>
<keyword id="KW-1185">Reference proteome</keyword>
<keyword id="KW-0812">Transmembrane</keyword>
<keyword id="KW-1133">Transmembrane helix</keyword>
<gene>
    <name evidence="6" type="primary">Plpp7</name>
    <name type="synonym">Ppapdc3</name>
</gene>
<feature type="chain" id="PRO_0000239403" description="Inactive phospholipid phosphatase 7">
    <location>
        <begin position="1"/>
        <end position="271"/>
    </location>
</feature>
<feature type="topological domain" description="Cytoplasmic" evidence="3">
    <location>
        <begin position="1"/>
        <end position="112"/>
    </location>
</feature>
<feature type="transmembrane region" description="Helical" evidence="3">
    <location>
        <begin position="113"/>
        <end position="133"/>
    </location>
</feature>
<feature type="topological domain" description="Extracellular" evidence="3">
    <location>
        <begin position="134"/>
        <end position="141"/>
    </location>
</feature>
<feature type="transmembrane region" description="Helical" evidence="3">
    <location>
        <begin position="142"/>
        <end position="162"/>
    </location>
</feature>
<feature type="topological domain" description="Cytoplasmic" evidence="3">
    <location>
        <begin position="163"/>
        <end position="202"/>
    </location>
</feature>
<feature type="transmembrane region" description="Helical" evidence="3">
    <location>
        <begin position="203"/>
        <end position="223"/>
    </location>
</feature>
<feature type="topological domain" description="Extracellular" evidence="3">
    <location>
        <begin position="224"/>
        <end position="239"/>
    </location>
</feature>
<feature type="transmembrane region" description="Helical" evidence="3">
    <location>
        <begin position="240"/>
        <end position="260"/>
    </location>
</feature>
<feature type="topological domain" description="Cytoplasmic" evidence="3">
    <location>
        <begin position="261"/>
        <end position="271"/>
    </location>
</feature>
<feature type="region of interest" description="Disordered" evidence="4">
    <location>
        <begin position="1"/>
        <end position="69"/>
    </location>
</feature>
<feature type="region of interest" description="Interaction with MTOR" evidence="1">
    <location>
        <begin position="70"/>
        <end position="91"/>
    </location>
</feature>
<feature type="compositionally biased region" description="Polar residues" evidence="4">
    <location>
        <begin position="24"/>
        <end position="36"/>
    </location>
</feature>
<feature type="modified residue" description="Phosphoserine" evidence="2">
    <location>
        <position position="43"/>
    </location>
</feature>
<feature type="modified residue" description="Phosphoserine" evidence="2">
    <location>
        <position position="62"/>
    </location>
</feature>
<name>PLPP7_RAT</name>